<organism>
    <name type="scientific">Moorella thermoacetica (strain ATCC 39073 / JCM 9320)</name>
    <dbReference type="NCBI Taxonomy" id="264732"/>
    <lineage>
        <taxon>Bacteria</taxon>
        <taxon>Bacillati</taxon>
        <taxon>Bacillota</taxon>
        <taxon>Clostridia</taxon>
        <taxon>Moorellales</taxon>
        <taxon>Moorellaceae</taxon>
        <taxon>Moorella</taxon>
    </lineage>
</organism>
<dbReference type="EMBL" id="CP000232">
    <property type="protein sequence ID" value="ABC18459.1"/>
    <property type="molecule type" value="Genomic_DNA"/>
</dbReference>
<dbReference type="RefSeq" id="YP_429002.1">
    <property type="nucleotide sequence ID" value="NC_007644.1"/>
</dbReference>
<dbReference type="STRING" id="264732.Moth_0120"/>
<dbReference type="EnsemblBacteria" id="ABC18459">
    <property type="protein sequence ID" value="ABC18459"/>
    <property type="gene ID" value="Moth_0120"/>
</dbReference>
<dbReference type="KEGG" id="mta:Moth_0120"/>
<dbReference type="PATRIC" id="fig|264732.11.peg.125"/>
<dbReference type="eggNOG" id="COG2707">
    <property type="taxonomic scope" value="Bacteria"/>
</dbReference>
<dbReference type="HOGENOM" id="CLU_125889_1_0_9"/>
<dbReference type="OrthoDB" id="80306at2"/>
<dbReference type="GO" id="GO:0005886">
    <property type="term" value="C:plasma membrane"/>
    <property type="evidence" value="ECO:0007669"/>
    <property type="project" value="UniProtKB-SubCell"/>
</dbReference>
<dbReference type="HAMAP" id="MF_01874">
    <property type="entry name" value="UPF0756"/>
    <property type="match status" value="1"/>
</dbReference>
<dbReference type="InterPro" id="IPR007382">
    <property type="entry name" value="UPF0756_TM"/>
</dbReference>
<dbReference type="PANTHER" id="PTHR38452">
    <property type="entry name" value="UPF0756 MEMBRANE PROTEIN YEAL"/>
    <property type="match status" value="1"/>
</dbReference>
<dbReference type="PANTHER" id="PTHR38452:SF1">
    <property type="entry name" value="UPF0756 MEMBRANE PROTEIN YEAL"/>
    <property type="match status" value="1"/>
</dbReference>
<dbReference type="Pfam" id="PF04284">
    <property type="entry name" value="DUF441"/>
    <property type="match status" value="1"/>
</dbReference>
<comment type="subcellular location">
    <subcellularLocation>
        <location evidence="1">Cell membrane</location>
        <topology evidence="1">Multi-pass membrane protein</topology>
    </subcellularLocation>
</comment>
<comment type="similarity">
    <text evidence="1">Belongs to the UPF0756 family.</text>
</comment>
<protein>
    <recommendedName>
        <fullName evidence="1">UPF0756 membrane protein Moth_0120</fullName>
    </recommendedName>
</protein>
<proteinExistence type="inferred from homology"/>
<evidence type="ECO:0000255" key="1">
    <source>
        <dbReference type="HAMAP-Rule" id="MF_01874"/>
    </source>
</evidence>
<name>Y120_MOOTA</name>
<feature type="chain" id="PRO_5000105671" description="UPF0756 membrane protein Moth_0120">
    <location>
        <begin position="1"/>
        <end position="151"/>
    </location>
</feature>
<feature type="transmembrane region" description="Helical" evidence="1">
    <location>
        <begin position="6"/>
        <end position="26"/>
    </location>
</feature>
<feature type="transmembrane region" description="Helical" evidence="1">
    <location>
        <begin position="52"/>
        <end position="72"/>
    </location>
</feature>
<feature type="transmembrane region" description="Helical" evidence="1">
    <location>
        <begin position="75"/>
        <end position="95"/>
    </location>
</feature>
<feature type="transmembrane region" description="Helical" evidence="1">
    <location>
        <begin position="111"/>
        <end position="131"/>
    </location>
</feature>
<reference key="1">
    <citation type="journal article" date="2008" name="Environ. Microbiol.">
        <title>The complete genome sequence of Moorella thermoacetica (f. Clostridium thermoaceticum).</title>
        <authorList>
            <person name="Pierce E."/>
            <person name="Xie G."/>
            <person name="Barabote R.D."/>
            <person name="Saunders E."/>
            <person name="Han C.S."/>
            <person name="Detter J.C."/>
            <person name="Richardson P."/>
            <person name="Brettin T.S."/>
            <person name="Das A."/>
            <person name="Ljungdahl L.G."/>
            <person name="Ragsdale S.W."/>
        </authorList>
    </citation>
    <scope>NUCLEOTIDE SEQUENCE [LARGE SCALE GENOMIC DNA]</scope>
    <source>
        <strain>ATCC 39073 / JCM 9320</strain>
    </source>
</reference>
<accession>Q2RM80</accession>
<sequence length="151" mass="16028">MSAATVILILLMLLGILGRSNVIAAAAAFLLLLQFTSLQRFYPILERRALEAGLIFLVVSVLVPFASGRVAPRDMLQSFVSLPGLIAIASGIIATHMNCQGLELLQRFPQMMIGMVIGSIIGVAFFGGIPVGPLMAGGIAALLVHLMAWLR</sequence>
<keyword id="KW-1003">Cell membrane</keyword>
<keyword id="KW-0472">Membrane</keyword>
<keyword id="KW-0812">Transmembrane</keyword>
<keyword id="KW-1133">Transmembrane helix</keyword>
<gene>
    <name type="ordered locus">Moth_0120</name>
</gene>